<keyword id="KW-0030">Aminoacyl-tRNA synthetase</keyword>
<keyword id="KW-0067">ATP-binding</keyword>
<keyword id="KW-0963">Cytoplasm</keyword>
<keyword id="KW-0436">Ligase</keyword>
<keyword id="KW-0479">Metal-binding</keyword>
<keyword id="KW-0547">Nucleotide-binding</keyword>
<keyword id="KW-0648">Protein biosynthesis</keyword>
<keyword id="KW-0862">Zinc</keyword>
<organism>
    <name type="scientific">Vibrio atlanticus (strain LGP32)</name>
    <name type="common">Vibrio splendidus (strain Mel32)</name>
    <dbReference type="NCBI Taxonomy" id="575788"/>
    <lineage>
        <taxon>Bacteria</taxon>
        <taxon>Pseudomonadati</taxon>
        <taxon>Pseudomonadota</taxon>
        <taxon>Gammaproteobacteria</taxon>
        <taxon>Vibrionales</taxon>
        <taxon>Vibrionaceae</taxon>
        <taxon>Vibrio</taxon>
    </lineage>
</organism>
<feature type="chain" id="PRO_1000117310" description="Cysteine--tRNA ligase">
    <location>
        <begin position="1"/>
        <end position="461"/>
    </location>
</feature>
<feature type="short sequence motif" description="'HIGH' region">
    <location>
        <begin position="30"/>
        <end position="40"/>
    </location>
</feature>
<feature type="short sequence motif" description="'KMSKS' region">
    <location>
        <begin position="266"/>
        <end position="270"/>
    </location>
</feature>
<feature type="binding site" evidence="1">
    <location>
        <position position="28"/>
    </location>
    <ligand>
        <name>Zn(2+)</name>
        <dbReference type="ChEBI" id="CHEBI:29105"/>
    </ligand>
</feature>
<feature type="binding site" evidence="1">
    <location>
        <position position="209"/>
    </location>
    <ligand>
        <name>Zn(2+)</name>
        <dbReference type="ChEBI" id="CHEBI:29105"/>
    </ligand>
</feature>
<feature type="binding site" evidence="1">
    <location>
        <position position="234"/>
    </location>
    <ligand>
        <name>Zn(2+)</name>
        <dbReference type="ChEBI" id="CHEBI:29105"/>
    </ligand>
</feature>
<feature type="binding site" evidence="1">
    <location>
        <position position="238"/>
    </location>
    <ligand>
        <name>Zn(2+)</name>
        <dbReference type="ChEBI" id="CHEBI:29105"/>
    </ligand>
</feature>
<feature type="binding site" evidence="1">
    <location>
        <position position="269"/>
    </location>
    <ligand>
        <name>ATP</name>
        <dbReference type="ChEBI" id="CHEBI:30616"/>
    </ligand>
</feature>
<sequence>MLKIYNTLTRQKEEFKPITAGKVGMYVCGVTIYDLCHIGHGRTFVSFDVVTRYLRYLGYDLNFVRNITDIDDKIIKRANENGESCDSLTERLIGEMHADFDALNMKRPDVEPRATEFITEIIELVEKLIQRGFAYVASNGDVMFEVKKFDEYGKLSKQDLDQLQAGARVDIDSAKRSPLDFVLWKMSKPGEPTWESPWGPGRPGWHIECSAMNSSILGNHFDIHGGGSDLQFPHHENEIAQSCCAHGTQYVNTWMHSGMVMVDREKMSKSLGNFFTIRDVLQHYDAETVRYFLMSGHYRSQLNYSEDNLNQARASLERLYTSLRGLDVTAAPAGGEEYVTRFSTAMNDDFNTPEAYSVLFEMAREINRIKTESIEKASALGALMRELADIIGILHQDPEAFLQGDAAGNDDEVAEIEGLIKLRNDSRASKDWANADLARDKLNELGIVLEDGPEGTTWRRK</sequence>
<proteinExistence type="inferred from homology"/>
<comment type="catalytic activity">
    <reaction evidence="1">
        <text>tRNA(Cys) + L-cysteine + ATP = L-cysteinyl-tRNA(Cys) + AMP + diphosphate</text>
        <dbReference type="Rhea" id="RHEA:17773"/>
        <dbReference type="Rhea" id="RHEA-COMP:9661"/>
        <dbReference type="Rhea" id="RHEA-COMP:9679"/>
        <dbReference type="ChEBI" id="CHEBI:30616"/>
        <dbReference type="ChEBI" id="CHEBI:33019"/>
        <dbReference type="ChEBI" id="CHEBI:35235"/>
        <dbReference type="ChEBI" id="CHEBI:78442"/>
        <dbReference type="ChEBI" id="CHEBI:78517"/>
        <dbReference type="ChEBI" id="CHEBI:456215"/>
        <dbReference type="EC" id="6.1.1.16"/>
    </reaction>
</comment>
<comment type="cofactor">
    <cofactor evidence="1">
        <name>Zn(2+)</name>
        <dbReference type="ChEBI" id="CHEBI:29105"/>
    </cofactor>
    <text evidence="1">Binds 1 zinc ion per subunit.</text>
</comment>
<comment type="subunit">
    <text evidence="1">Monomer.</text>
</comment>
<comment type="subcellular location">
    <subcellularLocation>
        <location evidence="1">Cytoplasm</location>
    </subcellularLocation>
</comment>
<comment type="similarity">
    <text evidence="1">Belongs to the class-I aminoacyl-tRNA synthetase family.</text>
</comment>
<name>SYC_VIBA3</name>
<evidence type="ECO:0000255" key="1">
    <source>
        <dbReference type="HAMAP-Rule" id="MF_00041"/>
    </source>
</evidence>
<dbReference type="EC" id="6.1.1.16" evidence="1"/>
<dbReference type="EMBL" id="FM954972">
    <property type="protein sequence ID" value="CAV19191.1"/>
    <property type="molecule type" value="Genomic_DNA"/>
</dbReference>
<dbReference type="SMR" id="B7VGZ1"/>
<dbReference type="STRING" id="575788.VS_2014"/>
<dbReference type="KEGG" id="vsp:VS_2014"/>
<dbReference type="PATRIC" id="fig|575788.5.peg.3293"/>
<dbReference type="eggNOG" id="COG0215">
    <property type="taxonomic scope" value="Bacteria"/>
</dbReference>
<dbReference type="HOGENOM" id="CLU_013528_0_1_6"/>
<dbReference type="Proteomes" id="UP000009100">
    <property type="component" value="Chromosome 1"/>
</dbReference>
<dbReference type="GO" id="GO:0005829">
    <property type="term" value="C:cytosol"/>
    <property type="evidence" value="ECO:0007669"/>
    <property type="project" value="TreeGrafter"/>
</dbReference>
<dbReference type="GO" id="GO:0005524">
    <property type="term" value="F:ATP binding"/>
    <property type="evidence" value="ECO:0007669"/>
    <property type="project" value="UniProtKB-UniRule"/>
</dbReference>
<dbReference type="GO" id="GO:0004817">
    <property type="term" value="F:cysteine-tRNA ligase activity"/>
    <property type="evidence" value="ECO:0007669"/>
    <property type="project" value="UniProtKB-UniRule"/>
</dbReference>
<dbReference type="GO" id="GO:0008270">
    <property type="term" value="F:zinc ion binding"/>
    <property type="evidence" value="ECO:0007669"/>
    <property type="project" value="UniProtKB-UniRule"/>
</dbReference>
<dbReference type="GO" id="GO:0006423">
    <property type="term" value="P:cysteinyl-tRNA aminoacylation"/>
    <property type="evidence" value="ECO:0007669"/>
    <property type="project" value="UniProtKB-UniRule"/>
</dbReference>
<dbReference type="CDD" id="cd07963">
    <property type="entry name" value="Anticodon_Ia_Cys"/>
    <property type="match status" value="1"/>
</dbReference>
<dbReference type="CDD" id="cd00672">
    <property type="entry name" value="CysRS_core"/>
    <property type="match status" value="1"/>
</dbReference>
<dbReference type="FunFam" id="1.20.120.1910:FF:000001">
    <property type="entry name" value="Cysteine--tRNA ligase"/>
    <property type="match status" value="1"/>
</dbReference>
<dbReference type="FunFam" id="3.40.50.620:FF:000009">
    <property type="entry name" value="Cysteine--tRNA ligase"/>
    <property type="match status" value="1"/>
</dbReference>
<dbReference type="Gene3D" id="1.20.120.1910">
    <property type="entry name" value="Cysteine-tRNA ligase, C-terminal anti-codon recognition domain"/>
    <property type="match status" value="1"/>
</dbReference>
<dbReference type="Gene3D" id="3.40.50.620">
    <property type="entry name" value="HUPs"/>
    <property type="match status" value="1"/>
</dbReference>
<dbReference type="HAMAP" id="MF_00041">
    <property type="entry name" value="Cys_tRNA_synth"/>
    <property type="match status" value="1"/>
</dbReference>
<dbReference type="InterPro" id="IPR015803">
    <property type="entry name" value="Cys-tRNA-ligase"/>
</dbReference>
<dbReference type="InterPro" id="IPR015273">
    <property type="entry name" value="Cys-tRNA-synt_Ia_DALR"/>
</dbReference>
<dbReference type="InterPro" id="IPR024909">
    <property type="entry name" value="Cys-tRNA/MSH_ligase"/>
</dbReference>
<dbReference type="InterPro" id="IPR056411">
    <property type="entry name" value="CysS_C"/>
</dbReference>
<dbReference type="InterPro" id="IPR014729">
    <property type="entry name" value="Rossmann-like_a/b/a_fold"/>
</dbReference>
<dbReference type="InterPro" id="IPR032678">
    <property type="entry name" value="tRNA-synt_1_cat_dom"/>
</dbReference>
<dbReference type="InterPro" id="IPR009080">
    <property type="entry name" value="tRNAsynth_Ia_anticodon-bd"/>
</dbReference>
<dbReference type="NCBIfam" id="TIGR00435">
    <property type="entry name" value="cysS"/>
    <property type="match status" value="1"/>
</dbReference>
<dbReference type="PANTHER" id="PTHR10890:SF3">
    <property type="entry name" value="CYSTEINE--TRNA LIGASE, CYTOPLASMIC"/>
    <property type="match status" value="1"/>
</dbReference>
<dbReference type="PANTHER" id="PTHR10890">
    <property type="entry name" value="CYSTEINYL-TRNA SYNTHETASE"/>
    <property type="match status" value="1"/>
</dbReference>
<dbReference type="Pfam" id="PF23493">
    <property type="entry name" value="CysS_C"/>
    <property type="match status" value="1"/>
</dbReference>
<dbReference type="Pfam" id="PF09190">
    <property type="entry name" value="DALR_2"/>
    <property type="match status" value="1"/>
</dbReference>
<dbReference type="Pfam" id="PF01406">
    <property type="entry name" value="tRNA-synt_1e"/>
    <property type="match status" value="1"/>
</dbReference>
<dbReference type="PRINTS" id="PR00983">
    <property type="entry name" value="TRNASYNTHCYS"/>
</dbReference>
<dbReference type="SMART" id="SM00840">
    <property type="entry name" value="DALR_2"/>
    <property type="match status" value="1"/>
</dbReference>
<dbReference type="SUPFAM" id="SSF47323">
    <property type="entry name" value="Anticodon-binding domain of a subclass of class I aminoacyl-tRNA synthetases"/>
    <property type="match status" value="1"/>
</dbReference>
<dbReference type="SUPFAM" id="SSF52374">
    <property type="entry name" value="Nucleotidylyl transferase"/>
    <property type="match status" value="1"/>
</dbReference>
<accession>B7VGZ1</accession>
<protein>
    <recommendedName>
        <fullName evidence="1">Cysteine--tRNA ligase</fullName>
        <ecNumber evidence="1">6.1.1.16</ecNumber>
    </recommendedName>
    <alternativeName>
        <fullName evidence="1">Cysteinyl-tRNA synthetase</fullName>
        <shortName evidence="1">CysRS</shortName>
    </alternativeName>
</protein>
<gene>
    <name evidence="1" type="primary">cysS</name>
    <name type="ordered locus">VS_2014</name>
</gene>
<reference key="1">
    <citation type="submission" date="2009-02" db="EMBL/GenBank/DDBJ databases">
        <title>Vibrio splendidus str. LGP32 complete genome.</title>
        <authorList>
            <person name="Mazel D."/>
            <person name="Le Roux F."/>
        </authorList>
    </citation>
    <scope>NUCLEOTIDE SEQUENCE [LARGE SCALE GENOMIC DNA]</scope>
    <source>
        <strain>LGP32</strain>
    </source>
</reference>